<organism>
    <name type="scientific">Staphylococcus epidermidis (strain ATCC 35984 / DSM 28319 / BCRC 17069 / CCUG 31568 / BM 3577 / RP62A)</name>
    <dbReference type="NCBI Taxonomy" id="176279"/>
    <lineage>
        <taxon>Bacteria</taxon>
        <taxon>Bacillati</taxon>
        <taxon>Bacillota</taxon>
        <taxon>Bacilli</taxon>
        <taxon>Bacillales</taxon>
        <taxon>Staphylococcaceae</taxon>
        <taxon>Staphylococcus</taxon>
    </lineage>
</organism>
<gene>
    <name type="primary">ldhD</name>
    <name type="synonym">ddh</name>
    <name type="ordered locus">SERP2087</name>
</gene>
<sequence>MTKIMFFGTRAYEKDMALRWGKKNNIDVTTSTELLSVDTVDQLKDYDGVTTMQFGKLEPEVYPKLESYGIKQIAQRTAGFDMYDLELAKKHEIIISNIPSYSPETIAEYSVSIALQLVRKFPTIEKRVQAHNFTWASPIMSRPVKNMTVAIIGTGRIGAATGKIYAGFGARVVGYDAYPNHSLSFLEYKETVEDAIKDADIISLHVPANKDSFHLFDNNMFKNVKKGAVLVNAARGAVINTPDLIEAVNNGTLSGAAIDTYENEANYFTFDCSNQTIDDPILLDLIRNENILVTPHIAFFSDEAVQNLVEGGLNAALSVINTGTCDTRLN</sequence>
<evidence type="ECO:0000250" key="1">
    <source>
        <dbReference type="UniProtKB" id="P26297"/>
    </source>
</evidence>
<evidence type="ECO:0000250" key="2">
    <source>
        <dbReference type="UniProtKB" id="P30901"/>
    </source>
</evidence>
<evidence type="ECO:0000305" key="3"/>
<comment type="catalytic activity">
    <reaction>
        <text>(R)-lactate + NAD(+) = pyruvate + NADH + H(+)</text>
        <dbReference type="Rhea" id="RHEA:16369"/>
        <dbReference type="ChEBI" id="CHEBI:15361"/>
        <dbReference type="ChEBI" id="CHEBI:15378"/>
        <dbReference type="ChEBI" id="CHEBI:16004"/>
        <dbReference type="ChEBI" id="CHEBI:57540"/>
        <dbReference type="ChEBI" id="CHEBI:57945"/>
        <dbReference type="EC" id="1.1.1.28"/>
    </reaction>
</comment>
<comment type="similarity">
    <text evidence="3">Belongs to the D-isomer specific 2-hydroxyacid dehydrogenase family.</text>
</comment>
<dbReference type="EC" id="1.1.1.28"/>
<dbReference type="EMBL" id="CP000029">
    <property type="protein sequence ID" value="AAW52941.1"/>
    <property type="molecule type" value="Genomic_DNA"/>
</dbReference>
<dbReference type="RefSeq" id="WP_002456690.1">
    <property type="nucleotide sequence ID" value="NC_002976.3"/>
</dbReference>
<dbReference type="SMR" id="Q5HLA0"/>
<dbReference type="STRING" id="176279.SERP2087"/>
<dbReference type="KEGG" id="ser:SERP2087"/>
<dbReference type="eggNOG" id="COG1052">
    <property type="taxonomic scope" value="Bacteria"/>
</dbReference>
<dbReference type="HOGENOM" id="CLU_019796_1_1_9"/>
<dbReference type="Proteomes" id="UP000000531">
    <property type="component" value="Chromosome"/>
</dbReference>
<dbReference type="GO" id="GO:0008720">
    <property type="term" value="F:D-lactate dehydrogenase activity"/>
    <property type="evidence" value="ECO:0007669"/>
    <property type="project" value="UniProtKB-EC"/>
</dbReference>
<dbReference type="GO" id="GO:0051287">
    <property type="term" value="F:NAD binding"/>
    <property type="evidence" value="ECO:0007669"/>
    <property type="project" value="InterPro"/>
</dbReference>
<dbReference type="CDD" id="cd12186">
    <property type="entry name" value="LDH"/>
    <property type="match status" value="1"/>
</dbReference>
<dbReference type="Gene3D" id="3.40.50.720">
    <property type="entry name" value="NAD(P)-binding Rossmann-like Domain"/>
    <property type="match status" value="2"/>
</dbReference>
<dbReference type="InterPro" id="IPR006139">
    <property type="entry name" value="D-isomer_2_OHA_DH_cat_dom"/>
</dbReference>
<dbReference type="InterPro" id="IPR029753">
    <property type="entry name" value="D-isomer_DH_CS"/>
</dbReference>
<dbReference type="InterPro" id="IPR029752">
    <property type="entry name" value="D-isomer_DH_CS1"/>
</dbReference>
<dbReference type="InterPro" id="IPR006140">
    <property type="entry name" value="D-isomer_DH_NAD-bd"/>
</dbReference>
<dbReference type="InterPro" id="IPR036291">
    <property type="entry name" value="NAD(P)-bd_dom_sf"/>
</dbReference>
<dbReference type="NCBIfam" id="NF006374">
    <property type="entry name" value="PRK08605.1"/>
    <property type="match status" value="1"/>
</dbReference>
<dbReference type="NCBIfam" id="NF009127">
    <property type="entry name" value="PRK12480.1"/>
    <property type="match status" value="1"/>
</dbReference>
<dbReference type="PANTHER" id="PTHR43026">
    <property type="entry name" value="2-HYDROXYACID DEHYDROGENASE HOMOLOG 1-RELATED"/>
    <property type="match status" value="1"/>
</dbReference>
<dbReference type="PANTHER" id="PTHR43026:SF1">
    <property type="entry name" value="2-HYDROXYACID DEHYDROGENASE HOMOLOG 1-RELATED"/>
    <property type="match status" value="1"/>
</dbReference>
<dbReference type="Pfam" id="PF00389">
    <property type="entry name" value="2-Hacid_dh"/>
    <property type="match status" value="1"/>
</dbReference>
<dbReference type="Pfam" id="PF02826">
    <property type="entry name" value="2-Hacid_dh_C"/>
    <property type="match status" value="1"/>
</dbReference>
<dbReference type="SUPFAM" id="SSF52283">
    <property type="entry name" value="Formate/glycerate dehydrogenase catalytic domain-like"/>
    <property type="match status" value="1"/>
</dbReference>
<dbReference type="SUPFAM" id="SSF51735">
    <property type="entry name" value="NAD(P)-binding Rossmann-fold domains"/>
    <property type="match status" value="1"/>
</dbReference>
<dbReference type="PROSITE" id="PS00065">
    <property type="entry name" value="D_2_HYDROXYACID_DH_1"/>
    <property type="match status" value="1"/>
</dbReference>
<dbReference type="PROSITE" id="PS00670">
    <property type="entry name" value="D_2_HYDROXYACID_DH_2"/>
    <property type="match status" value="1"/>
</dbReference>
<dbReference type="PROSITE" id="PS00671">
    <property type="entry name" value="D_2_HYDROXYACID_DH_3"/>
    <property type="match status" value="1"/>
</dbReference>
<protein>
    <recommendedName>
        <fullName>D-lactate dehydrogenase</fullName>
        <shortName>D-LDH</shortName>
        <ecNumber>1.1.1.28</ecNumber>
    </recommendedName>
    <alternativeName>
        <fullName>D-specific 2-hydroxyacid dehydrogenase</fullName>
    </alternativeName>
</protein>
<proteinExistence type="inferred from homology"/>
<feature type="chain" id="PRO_0000075967" description="D-lactate dehydrogenase">
    <location>
        <begin position="1"/>
        <end position="330"/>
    </location>
</feature>
<feature type="active site" evidence="1">
    <location>
        <position position="235"/>
    </location>
</feature>
<feature type="active site" evidence="1">
    <location>
        <position position="264"/>
    </location>
</feature>
<feature type="active site" description="Proton donor" evidence="1">
    <location>
        <position position="296"/>
    </location>
</feature>
<feature type="binding site" evidence="2">
    <location>
        <begin position="156"/>
        <end position="157"/>
    </location>
    <ligand>
        <name>NAD(+)</name>
        <dbReference type="ChEBI" id="CHEBI:57540"/>
    </ligand>
</feature>
<feature type="binding site" evidence="1">
    <location>
        <position position="176"/>
    </location>
    <ligand>
        <name>NAD(+)</name>
        <dbReference type="ChEBI" id="CHEBI:57540"/>
    </ligand>
</feature>
<feature type="binding site" evidence="2">
    <location>
        <begin position="206"/>
        <end position="207"/>
    </location>
    <ligand>
        <name>NAD(+)</name>
        <dbReference type="ChEBI" id="CHEBI:57540"/>
    </ligand>
</feature>
<feature type="binding site" evidence="2">
    <location>
        <begin position="233"/>
        <end position="235"/>
    </location>
    <ligand>
        <name>NAD(+)</name>
        <dbReference type="ChEBI" id="CHEBI:57540"/>
    </ligand>
</feature>
<feature type="binding site" evidence="2">
    <location>
        <position position="259"/>
    </location>
    <ligand>
        <name>NAD(+)</name>
        <dbReference type="ChEBI" id="CHEBI:57540"/>
    </ligand>
</feature>
<name>LDHD_STAEQ</name>
<reference key="1">
    <citation type="journal article" date="2005" name="J. Bacteriol.">
        <title>Insights on evolution of virulence and resistance from the complete genome analysis of an early methicillin-resistant Staphylococcus aureus strain and a biofilm-producing methicillin-resistant Staphylococcus epidermidis strain.</title>
        <authorList>
            <person name="Gill S.R."/>
            <person name="Fouts D.E."/>
            <person name="Archer G.L."/>
            <person name="Mongodin E.F."/>
            <person name="DeBoy R.T."/>
            <person name="Ravel J."/>
            <person name="Paulsen I.T."/>
            <person name="Kolonay J.F."/>
            <person name="Brinkac L.M."/>
            <person name="Beanan M.J."/>
            <person name="Dodson R.J."/>
            <person name="Daugherty S.C."/>
            <person name="Madupu R."/>
            <person name="Angiuoli S.V."/>
            <person name="Durkin A.S."/>
            <person name="Haft D.H."/>
            <person name="Vamathevan J.J."/>
            <person name="Khouri H."/>
            <person name="Utterback T.R."/>
            <person name="Lee C."/>
            <person name="Dimitrov G."/>
            <person name="Jiang L."/>
            <person name="Qin H."/>
            <person name="Weidman J."/>
            <person name="Tran K."/>
            <person name="Kang K.H."/>
            <person name="Hance I.R."/>
            <person name="Nelson K.E."/>
            <person name="Fraser C.M."/>
        </authorList>
    </citation>
    <scope>NUCLEOTIDE SEQUENCE [LARGE SCALE GENOMIC DNA]</scope>
    <source>
        <strain>ATCC 35984 / DSM 28319 / BCRC 17069 / CCUG 31568 / BM 3577 / RP62A</strain>
    </source>
</reference>
<keyword id="KW-0520">NAD</keyword>
<keyword id="KW-0560">Oxidoreductase</keyword>
<keyword id="KW-1185">Reference proteome</keyword>
<accession>Q5HLA0</accession>